<reference key="1">
    <citation type="journal article" date="2003" name="Proc. Natl. Acad. Sci. U.S.A.">
        <title>The genome sequence of Clostridium tetani, the causative agent of tetanus disease.</title>
        <authorList>
            <person name="Brueggemann H."/>
            <person name="Baeumer S."/>
            <person name="Fricke W.F."/>
            <person name="Wiezer A."/>
            <person name="Liesegang H."/>
            <person name="Decker I."/>
            <person name="Herzberg C."/>
            <person name="Martinez-Arias R."/>
            <person name="Merkl R."/>
            <person name="Henne A."/>
            <person name="Gottschalk G."/>
        </authorList>
    </citation>
    <scope>NUCLEOTIDE SEQUENCE [LARGE SCALE GENOMIC DNA]</scope>
    <source>
        <strain>Massachusetts / E88</strain>
    </source>
</reference>
<dbReference type="EC" id="6.1.1.20" evidence="1"/>
<dbReference type="EMBL" id="AE015927">
    <property type="protein sequence ID" value="AAO36758.1"/>
    <property type="molecule type" value="Genomic_DNA"/>
</dbReference>
<dbReference type="RefSeq" id="WP_011100419.1">
    <property type="nucleotide sequence ID" value="NC_004557.1"/>
</dbReference>
<dbReference type="SMR" id="Q891T7"/>
<dbReference type="STRING" id="212717.CTC_02278"/>
<dbReference type="GeneID" id="24255166"/>
<dbReference type="KEGG" id="ctc:CTC_02278"/>
<dbReference type="HOGENOM" id="CLU_025086_0_1_9"/>
<dbReference type="OrthoDB" id="9800719at2"/>
<dbReference type="Proteomes" id="UP000001412">
    <property type="component" value="Chromosome"/>
</dbReference>
<dbReference type="GO" id="GO:0005737">
    <property type="term" value="C:cytoplasm"/>
    <property type="evidence" value="ECO:0007669"/>
    <property type="project" value="UniProtKB-SubCell"/>
</dbReference>
<dbReference type="GO" id="GO:0005524">
    <property type="term" value="F:ATP binding"/>
    <property type="evidence" value="ECO:0007669"/>
    <property type="project" value="UniProtKB-UniRule"/>
</dbReference>
<dbReference type="GO" id="GO:0140096">
    <property type="term" value="F:catalytic activity, acting on a protein"/>
    <property type="evidence" value="ECO:0007669"/>
    <property type="project" value="UniProtKB-ARBA"/>
</dbReference>
<dbReference type="GO" id="GO:0000287">
    <property type="term" value="F:magnesium ion binding"/>
    <property type="evidence" value="ECO:0007669"/>
    <property type="project" value="UniProtKB-UniRule"/>
</dbReference>
<dbReference type="GO" id="GO:0004826">
    <property type="term" value="F:phenylalanine-tRNA ligase activity"/>
    <property type="evidence" value="ECO:0007669"/>
    <property type="project" value="UniProtKB-UniRule"/>
</dbReference>
<dbReference type="GO" id="GO:0016740">
    <property type="term" value="F:transferase activity"/>
    <property type="evidence" value="ECO:0007669"/>
    <property type="project" value="UniProtKB-ARBA"/>
</dbReference>
<dbReference type="GO" id="GO:0000049">
    <property type="term" value="F:tRNA binding"/>
    <property type="evidence" value="ECO:0007669"/>
    <property type="project" value="InterPro"/>
</dbReference>
<dbReference type="GO" id="GO:0006432">
    <property type="term" value="P:phenylalanyl-tRNA aminoacylation"/>
    <property type="evidence" value="ECO:0007669"/>
    <property type="project" value="UniProtKB-UniRule"/>
</dbReference>
<dbReference type="CDD" id="cd00496">
    <property type="entry name" value="PheRS_alpha_core"/>
    <property type="match status" value="1"/>
</dbReference>
<dbReference type="FunFam" id="3.30.930.10:FF:000003">
    <property type="entry name" value="Phenylalanine--tRNA ligase alpha subunit"/>
    <property type="match status" value="1"/>
</dbReference>
<dbReference type="Gene3D" id="3.30.930.10">
    <property type="entry name" value="Bira Bifunctional Protein, Domain 2"/>
    <property type="match status" value="1"/>
</dbReference>
<dbReference type="HAMAP" id="MF_00281">
    <property type="entry name" value="Phe_tRNA_synth_alpha1"/>
    <property type="match status" value="1"/>
</dbReference>
<dbReference type="InterPro" id="IPR006195">
    <property type="entry name" value="aa-tRNA-synth_II"/>
</dbReference>
<dbReference type="InterPro" id="IPR045864">
    <property type="entry name" value="aa-tRNA-synth_II/BPL/LPL"/>
</dbReference>
<dbReference type="InterPro" id="IPR004529">
    <property type="entry name" value="Phe-tRNA-synth_IIc_asu"/>
</dbReference>
<dbReference type="InterPro" id="IPR004188">
    <property type="entry name" value="Phe-tRNA_ligase_II_N"/>
</dbReference>
<dbReference type="InterPro" id="IPR022911">
    <property type="entry name" value="Phe_tRNA_ligase_alpha1_bac"/>
</dbReference>
<dbReference type="InterPro" id="IPR002319">
    <property type="entry name" value="Phenylalanyl-tRNA_Synthase"/>
</dbReference>
<dbReference type="InterPro" id="IPR010978">
    <property type="entry name" value="tRNA-bd_arm"/>
</dbReference>
<dbReference type="NCBIfam" id="TIGR00468">
    <property type="entry name" value="pheS"/>
    <property type="match status" value="1"/>
</dbReference>
<dbReference type="PANTHER" id="PTHR11538:SF41">
    <property type="entry name" value="PHENYLALANINE--TRNA LIGASE, MITOCHONDRIAL"/>
    <property type="match status" value="1"/>
</dbReference>
<dbReference type="PANTHER" id="PTHR11538">
    <property type="entry name" value="PHENYLALANYL-TRNA SYNTHETASE"/>
    <property type="match status" value="1"/>
</dbReference>
<dbReference type="Pfam" id="PF02912">
    <property type="entry name" value="Phe_tRNA-synt_N"/>
    <property type="match status" value="1"/>
</dbReference>
<dbReference type="Pfam" id="PF01409">
    <property type="entry name" value="tRNA-synt_2d"/>
    <property type="match status" value="1"/>
</dbReference>
<dbReference type="SUPFAM" id="SSF55681">
    <property type="entry name" value="Class II aaRS and biotin synthetases"/>
    <property type="match status" value="1"/>
</dbReference>
<dbReference type="SUPFAM" id="SSF46589">
    <property type="entry name" value="tRNA-binding arm"/>
    <property type="match status" value="1"/>
</dbReference>
<dbReference type="PROSITE" id="PS50862">
    <property type="entry name" value="AA_TRNA_LIGASE_II"/>
    <property type="match status" value="1"/>
</dbReference>
<gene>
    <name evidence="1" type="primary">pheS</name>
    <name type="ordered locus">CTC_02278</name>
</gene>
<organism>
    <name type="scientific">Clostridium tetani (strain Massachusetts / E88)</name>
    <dbReference type="NCBI Taxonomy" id="212717"/>
    <lineage>
        <taxon>Bacteria</taxon>
        <taxon>Bacillati</taxon>
        <taxon>Bacillota</taxon>
        <taxon>Clostridia</taxon>
        <taxon>Eubacteriales</taxon>
        <taxon>Clostridiaceae</taxon>
        <taxon>Clostridium</taxon>
    </lineage>
</organism>
<sequence>MKEILEKIKKNAIEELNNVVDKETIESIRVKYLGKKGELTKILRGMGGLSAEERPIVGKLANEIRKNIEEIIETTLKEIKEKEKNIKLSEETIDITLPGKRQYLGKRHPLEQTLDKMKEIFINMGFTVEEGPEIELDYYNFEALNIPKNHPARGEQDTFYINDNVVLRTQTSPIQIRTMESQKLPIKMIAPGKVYRSDSVDATHSPIFYQMEGLVVDKGVTFADLKGTLDMFAKKMFGEDLKTKFRPHHFPFTEPSAEMDATCFVCHGEGCKVCKGEGWIEILGGGMVHPQVLKNCGIDPEVYSGFAFGFGVDRMVMQKYGIDDIRLLYESDMRFLNQF</sequence>
<name>SYFA_CLOTE</name>
<protein>
    <recommendedName>
        <fullName evidence="1">Phenylalanine--tRNA ligase alpha subunit</fullName>
        <ecNumber evidence="1">6.1.1.20</ecNumber>
    </recommendedName>
    <alternativeName>
        <fullName evidence="1">Phenylalanyl-tRNA synthetase alpha subunit</fullName>
        <shortName evidence="1">PheRS</shortName>
    </alternativeName>
</protein>
<feature type="chain" id="PRO_0000126693" description="Phenylalanine--tRNA ligase alpha subunit">
    <location>
        <begin position="1"/>
        <end position="339"/>
    </location>
</feature>
<feature type="binding site" evidence="1">
    <location>
        <position position="254"/>
    </location>
    <ligand>
        <name>Mg(2+)</name>
        <dbReference type="ChEBI" id="CHEBI:18420"/>
        <note>shared with beta subunit</note>
    </ligand>
</feature>
<proteinExistence type="inferred from homology"/>
<accession>Q891T7</accession>
<keyword id="KW-0030">Aminoacyl-tRNA synthetase</keyword>
<keyword id="KW-0067">ATP-binding</keyword>
<keyword id="KW-0963">Cytoplasm</keyword>
<keyword id="KW-0436">Ligase</keyword>
<keyword id="KW-0460">Magnesium</keyword>
<keyword id="KW-0479">Metal-binding</keyword>
<keyword id="KW-0547">Nucleotide-binding</keyword>
<keyword id="KW-0648">Protein biosynthesis</keyword>
<keyword id="KW-1185">Reference proteome</keyword>
<evidence type="ECO:0000255" key="1">
    <source>
        <dbReference type="HAMAP-Rule" id="MF_00281"/>
    </source>
</evidence>
<comment type="catalytic activity">
    <reaction evidence="1">
        <text>tRNA(Phe) + L-phenylalanine + ATP = L-phenylalanyl-tRNA(Phe) + AMP + diphosphate + H(+)</text>
        <dbReference type="Rhea" id="RHEA:19413"/>
        <dbReference type="Rhea" id="RHEA-COMP:9668"/>
        <dbReference type="Rhea" id="RHEA-COMP:9699"/>
        <dbReference type="ChEBI" id="CHEBI:15378"/>
        <dbReference type="ChEBI" id="CHEBI:30616"/>
        <dbReference type="ChEBI" id="CHEBI:33019"/>
        <dbReference type="ChEBI" id="CHEBI:58095"/>
        <dbReference type="ChEBI" id="CHEBI:78442"/>
        <dbReference type="ChEBI" id="CHEBI:78531"/>
        <dbReference type="ChEBI" id="CHEBI:456215"/>
        <dbReference type="EC" id="6.1.1.20"/>
    </reaction>
</comment>
<comment type="cofactor">
    <cofactor evidence="1">
        <name>Mg(2+)</name>
        <dbReference type="ChEBI" id="CHEBI:18420"/>
    </cofactor>
    <text evidence="1">Binds 2 magnesium ions per tetramer.</text>
</comment>
<comment type="subunit">
    <text evidence="1">Tetramer of two alpha and two beta subunits.</text>
</comment>
<comment type="subcellular location">
    <subcellularLocation>
        <location evidence="1">Cytoplasm</location>
    </subcellularLocation>
</comment>
<comment type="similarity">
    <text evidence="1">Belongs to the class-II aminoacyl-tRNA synthetase family. Phe-tRNA synthetase alpha subunit type 1 subfamily.</text>
</comment>